<comment type="function">
    <text evidence="1">Binds the lower part of the 30S subunit head. Binds mRNA in the 70S ribosome, positioning it for translation.</text>
</comment>
<comment type="subunit">
    <text evidence="1">Part of the 30S ribosomal subunit. Forms a tight complex with proteins S10 and S14.</text>
</comment>
<comment type="similarity">
    <text evidence="1">Belongs to the universal ribosomal protein uS3 family.</text>
</comment>
<reference key="1">
    <citation type="journal article" date="2008" name="Antimicrob. Agents Chemother.">
        <title>Mutated response regulator graR is responsible for phenotypic conversion of Staphylococcus aureus from heterogeneous vancomycin-intermediate resistance to vancomycin-intermediate resistance.</title>
        <authorList>
            <person name="Neoh H.-M."/>
            <person name="Cui L."/>
            <person name="Yuzawa H."/>
            <person name="Takeuchi F."/>
            <person name="Matsuo M."/>
            <person name="Hiramatsu K."/>
        </authorList>
    </citation>
    <scope>NUCLEOTIDE SEQUENCE [LARGE SCALE GENOMIC DNA]</scope>
    <source>
        <strain>Mu3 / ATCC 700698</strain>
    </source>
</reference>
<accession>A7X5F5</accession>
<proteinExistence type="inferred from homology"/>
<keyword id="KW-0687">Ribonucleoprotein</keyword>
<keyword id="KW-0689">Ribosomal protein</keyword>
<keyword id="KW-0694">RNA-binding</keyword>
<keyword id="KW-0699">rRNA-binding</keyword>
<sequence>MGQKINPIGLRVGIIRDWEAKWYAEKDFASLLHEDLKIRKFIDNELKEASVSHVEIERAANRINIAIHTGKPGMVIGKGGSEIEKLRNKLNALTDKKVHINVIEIKKVDLDARLVAENIARQLENRASFRRVQKQAITRAMKLGAKGIKTQVSGRLGGADIARAEQYSEGTVPLHTLRADIDYAHAEADTTYGKLGVKVWIYRGEVLPTKNTSGGGK</sequence>
<name>RS3_STAA1</name>
<protein>
    <recommendedName>
        <fullName evidence="1">Small ribosomal subunit protein uS3</fullName>
    </recommendedName>
    <alternativeName>
        <fullName evidence="2">30S ribosomal protein S3</fullName>
    </alternativeName>
</protein>
<evidence type="ECO:0000255" key="1">
    <source>
        <dbReference type="HAMAP-Rule" id="MF_01309"/>
    </source>
</evidence>
<evidence type="ECO:0000305" key="2"/>
<dbReference type="EMBL" id="AP009324">
    <property type="protein sequence ID" value="BAF79111.1"/>
    <property type="molecule type" value="Genomic_DNA"/>
</dbReference>
<dbReference type="RefSeq" id="WP_000529877.1">
    <property type="nucleotide sequence ID" value="NZ_CTYB01000025.1"/>
</dbReference>
<dbReference type="SMR" id="A7X5F5"/>
<dbReference type="GeneID" id="98346556"/>
<dbReference type="KEGG" id="saw:SAHV_2228"/>
<dbReference type="HOGENOM" id="CLU_058591_0_2_9"/>
<dbReference type="GO" id="GO:0022627">
    <property type="term" value="C:cytosolic small ribosomal subunit"/>
    <property type="evidence" value="ECO:0007669"/>
    <property type="project" value="TreeGrafter"/>
</dbReference>
<dbReference type="GO" id="GO:0003729">
    <property type="term" value="F:mRNA binding"/>
    <property type="evidence" value="ECO:0007669"/>
    <property type="project" value="UniProtKB-UniRule"/>
</dbReference>
<dbReference type="GO" id="GO:0019843">
    <property type="term" value="F:rRNA binding"/>
    <property type="evidence" value="ECO:0007669"/>
    <property type="project" value="UniProtKB-UniRule"/>
</dbReference>
<dbReference type="GO" id="GO:0003735">
    <property type="term" value="F:structural constituent of ribosome"/>
    <property type="evidence" value="ECO:0007669"/>
    <property type="project" value="InterPro"/>
</dbReference>
<dbReference type="GO" id="GO:0006412">
    <property type="term" value="P:translation"/>
    <property type="evidence" value="ECO:0007669"/>
    <property type="project" value="UniProtKB-UniRule"/>
</dbReference>
<dbReference type="CDD" id="cd02412">
    <property type="entry name" value="KH-II_30S_S3"/>
    <property type="match status" value="1"/>
</dbReference>
<dbReference type="FunFam" id="3.30.1140.32:FF:000001">
    <property type="entry name" value="30S ribosomal protein S3"/>
    <property type="match status" value="1"/>
</dbReference>
<dbReference type="FunFam" id="3.30.300.20:FF:000001">
    <property type="entry name" value="30S ribosomal protein S3"/>
    <property type="match status" value="1"/>
</dbReference>
<dbReference type="Gene3D" id="3.30.300.20">
    <property type="match status" value="1"/>
</dbReference>
<dbReference type="Gene3D" id="3.30.1140.32">
    <property type="entry name" value="Ribosomal protein S3, C-terminal domain"/>
    <property type="match status" value="1"/>
</dbReference>
<dbReference type="HAMAP" id="MF_01309_B">
    <property type="entry name" value="Ribosomal_uS3_B"/>
    <property type="match status" value="1"/>
</dbReference>
<dbReference type="InterPro" id="IPR004087">
    <property type="entry name" value="KH_dom"/>
</dbReference>
<dbReference type="InterPro" id="IPR015946">
    <property type="entry name" value="KH_dom-like_a/b"/>
</dbReference>
<dbReference type="InterPro" id="IPR004044">
    <property type="entry name" value="KH_dom_type_2"/>
</dbReference>
<dbReference type="InterPro" id="IPR009019">
    <property type="entry name" value="KH_sf_prok-type"/>
</dbReference>
<dbReference type="InterPro" id="IPR036419">
    <property type="entry name" value="Ribosomal_S3_C_sf"/>
</dbReference>
<dbReference type="InterPro" id="IPR005704">
    <property type="entry name" value="Ribosomal_uS3_bac-typ"/>
</dbReference>
<dbReference type="InterPro" id="IPR001351">
    <property type="entry name" value="Ribosomal_uS3_C"/>
</dbReference>
<dbReference type="InterPro" id="IPR018280">
    <property type="entry name" value="Ribosomal_uS3_CS"/>
</dbReference>
<dbReference type="NCBIfam" id="TIGR01009">
    <property type="entry name" value="rpsC_bact"/>
    <property type="match status" value="1"/>
</dbReference>
<dbReference type="PANTHER" id="PTHR11760">
    <property type="entry name" value="30S/40S RIBOSOMAL PROTEIN S3"/>
    <property type="match status" value="1"/>
</dbReference>
<dbReference type="PANTHER" id="PTHR11760:SF19">
    <property type="entry name" value="SMALL RIBOSOMAL SUBUNIT PROTEIN US3C"/>
    <property type="match status" value="1"/>
</dbReference>
<dbReference type="Pfam" id="PF07650">
    <property type="entry name" value="KH_2"/>
    <property type="match status" value="1"/>
</dbReference>
<dbReference type="Pfam" id="PF00189">
    <property type="entry name" value="Ribosomal_S3_C"/>
    <property type="match status" value="1"/>
</dbReference>
<dbReference type="SMART" id="SM00322">
    <property type="entry name" value="KH"/>
    <property type="match status" value="1"/>
</dbReference>
<dbReference type="SUPFAM" id="SSF54814">
    <property type="entry name" value="Prokaryotic type KH domain (KH-domain type II)"/>
    <property type="match status" value="1"/>
</dbReference>
<dbReference type="SUPFAM" id="SSF54821">
    <property type="entry name" value="Ribosomal protein S3 C-terminal domain"/>
    <property type="match status" value="1"/>
</dbReference>
<dbReference type="PROSITE" id="PS50823">
    <property type="entry name" value="KH_TYPE_2"/>
    <property type="match status" value="1"/>
</dbReference>
<dbReference type="PROSITE" id="PS00548">
    <property type="entry name" value="RIBOSOMAL_S3"/>
    <property type="match status" value="1"/>
</dbReference>
<organism>
    <name type="scientific">Staphylococcus aureus (strain Mu3 / ATCC 700698)</name>
    <dbReference type="NCBI Taxonomy" id="418127"/>
    <lineage>
        <taxon>Bacteria</taxon>
        <taxon>Bacillati</taxon>
        <taxon>Bacillota</taxon>
        <taxon>Bacilli</taxon>
        <taxon>Bacillales</taxon>
        <taxon>Staphylococcaceae</taxon>
        <taxon>Staphylococcus</taxon>
    </lineage>
</organism>
<gene>
    <name evidence="1" type="primary">rpsC</name>
    <name type="ordered locus">SAHV_2228</name>
</gene>
<feature type="chain" id="PRO_0000323306" description="Small ribosomal subunit protein uS3">
    <location>
        <begin position="1"/>
        <end position="217"/>
    </location>
</feature>
<feature type="domain" description="KH type-2" evidence="1">
    <location>
        <begin position="38"/>
        <end position="106"/>
    </location>
</feature>